<accession>Q82EC8</accession>
<gene>
    <name evidence="1" type="primary">panC</name>
    <name type="ordered locus">SAV_4687</name>
</gene>
<feature type="chain" id="PRO_0000305563" description="Pantothenate synthetase">
    <location>
        <begin position="1"/>
        <end position="333"/>
    </location>
</feature>
<feature type="active site" description="Proton donor" evidence="1">
    <location>
        <position position="34"/>
    </location>
</feature>
<feature type="binding site" evidence="1">
    <location>
        <begin position="27"/>
        <end position="34"/>
    </location>
    <ligand>
        <name>ATP</name>
        <dbReference type="ChEBI" id="CHEBI:30616"/>
    </ligand>
</feature>
<feature type="binding site" evidence="1">
    <location>
        <position position="61"/>
    </location>
    <ligand>
        <name>(R)-pantoate</name>
        <dbReference type="ChEBI" id="CHEBI:15980"/>
    </ligand>
</feature>
<feature type="binding site" evidence="1">
    <location>
        <position position="61"/>
    </location>
    <ligand>
        <name>beta-alanine</name>
        <dbReference type="ChEBI" id="CHEBI:57966"/>
    </ligand>
</feature>
<feature type="binding site" evidence="1">
    <location>
        <begin position="148"/>
        <end position="151"/>
    </location>
    <ligand>
        <name>ATP</name>
        <dbReference type="ChEBI" id="CHEBI:30616"/>
    </ligand>
</feature>
<feature type="binding site" evidence="1">
    <location>
        <position position="154"/>
    </location>
    <ligand>
        <name>(R)-pantoate</name>
        <dbReference type="ChEBI" id="CHEBI:15980"/>
    </ligand>
</feature>
<feature type="binding site" evidence="1">
    <location>
        <position position="177"/>
    </location>
    <ligand>
        <name>ATP</name>
        <dbReference type="ChEBI" id="CHEBI:30616"/>
    </ligand>
</feature>
<feature type="binding site" evidence="1">
    <location>
        <begin position="185"/>
        <end position="188"/>
    </location>
    <ligand>
        <name>ATP</name>
        <dbReference type="ChEBI" id="CHEBI:30616"/>
    </ligand>
</feature>
<organism>
    <name type="scientific">Streptomyces avermitilis (strain ATCC 31267 / DSM 46492 / JCM 5070 / NBRC 14893 / NCIMB 12804 / NRRL 8165 / MA-4680)</name>
    <dbReference type="NCBI Taxonomy" id="227882"/>
    <lineage>
        <taxon>Bacteria</taxon>
        <taxon>Bacillati</taxon>
        <taxon>Actinomycetota</taxon>
        <taxon>Actinomycetes</taxon>
        <taxon>Kitasatosporales</taxon>
        <taxon>Streptomycetaceae</taxon>
        <taxon>Streptomyces</taxon>
    </lineage>
</organism>
<reference key="1">
    <citation type="journal article" date="2001" name="Proc. Natl. Acad. Sci. U.S.A.">
        <title>Genome sequence of an industrial microorganism Streptomyces avermitilis: deducing the ability of producing secondary metabolites.</title>
        <authorList>
            <person name="Omura S."/>
            <person name="Ikeda H."/>
            <person name="Ishikawa J."/>
            <person name="Hanamoto A."/>
            <person name="Takahashi C."/>
            <person name="Shinose M."/>
            <person name="Takahashi Y."/>
            <person name="Horikawa H."/>
            <person name="Nakazawa H."/>
            <person name="Osonoe T."/>
            <person name="Kikuchi H."/>
            <person name="Shiba T."/>
            <person name="Sakaki Y."/>
            <person name="Hattori M."/>
        </authorList>
    </citation>
    <scope>NUCLEOTIDE SEQUENCE [LARGE SCALE GENOMIC DNA]</scope>
    <source>
        <strain>ATCC 31267 / DSM 46492 / JCM 5070 / NBRC 14893 / NCIMB 12804 / NRRL 8165 / MA-4680</strain>
    </source>
</reference>
<reference key="2">
    <citation type="journal article" date="2003" name="Nat. Biotechnol.">
        <title>Complete genome sequence and comparative analysis of the industrial microorganism Streptomyces avermitilis.</title>
        <authorList>
            <person name="Ikeda H."/>
            <person name="Ishikawa J."/>
            <person name="Hanamoto A."/>
            <person name="Shinose M."/>
            <person name="Kikuchi H."/>
            <person name="Shiba T."/>
            <person name="Sakaki Y."/>
            <person name="Hattori M."/>
            <person name="Omura S."/>
        </authorList>
    </citation>
    <scope>NUCLEOTIDE SEQUENCE [LARGE SCALE GENOMIC DNA]</scope>
    <source>
        <strain>ATCC 31267 / DSM 46492 / JCM 5070 / NBRC 14893 / NCIMB 12804 / NRRL 8165 / MA-4680</strain>
    </source>
</reference>
<name>PANC_STRAW</name>
<sequence>MTTTLLRTADELHARVRHGRRAVVMTMGALHEGHATLIRTAREIAGAEGEVVVTVFVNPLQFGRGEDLDRYPRTLDADLKIAEAAGADVVFAPSADEVYPGGEPQVRISAGPMGERLEGAFRPGHFDGMLTVVGKLLHLTRPDVALYGQKDAQQLALIRRMARDLNFGVEIVGVPTVREDDGLALSSRNRYLAADERRTALALSQALFAGRDRHAAQEALRARAREVPATRARAEALSAIGESRAAADAHAVAKATPAGTSGPAAVRCAARLVLEEAARLQPPLVLDYLGLVDPSDFTEIPDDFTGEAVLAVAARVGTTRLIDNIPLTFGAAS</sequence>
<proteinExistence type="inferred from homology"/>
<protein>
    <recommendedName>
        <fullName evidence="1">Pantothenate synthetase</fullName>
        <shortName evidence="1">PS</shortName>
        <ecNumber evidence="1">6.3.2.1</ecNumber>
    </recommendedName>
    <alternativeName>
        <fullName evidence="1">Pantoate--beta-alanine ligase</fullName>
    </alternativeName>
    <alternativeName>
        <fullName evidence="1">Pantoate-activating enzyme</fullName>
    </alternativeName>
</protein>
<evidence type="ECO:0000255" key="1">
    <source>
        <dbReference type="HAMAP-Rule" id="MF_00158"/>
    </source>
</evidence>
<keyword id="KW-0067">ATP-binding</keyword>
<keyword id="KW-0963">Cytoplasm</keyword>
<keyword id="KW-0436">Ligase</keyword>
<keyword id="KW-0547">Nucleotide-binding</keyword>
<keyword id="KW-0566">Pantothenate biosynthesis</keyword>
<keyword id="KW-1185">Reference proteome</keyword>
<dbReference type="EC" id="6.3.2.1" evidence="1"/>
<dbReference type="EMBL" id="BA000030">
    <property type="protein sequence ID" value="BAC72399.1"/>
    <property type="molecule type" value="Genomic_DNA"/>
</dbReference>
<dbReference type="RefSeq" id="WP_010986111.1">
    <property type="nucleotide sequence ID" value="NZ_JZJK01000062.1"/>
</dbReference>
<dbReference type="SMR" id="Q82EC8"/>
<dbReference type="GeneID" id="41541768"/>
<dbReference type="KEGG" id="sma:SAVERM_4687"/>
<dbReference type="eggNOG" id="COG0414">
    <property type="taxonomic scope" value="Bacteria"/>
</dbReference>
<dbReference type="HOGENOM" id="CLU_047148_0_2_11"/>
<dbReference type="OrthoDB" id="9773087at2"/>
<dbReference type="UniPathway" id="UPA00028">
    <property type="reaction ID" value="UER00005"/>
</dbReference>
<dbReference type="Proteomes" id="UP000000428">
    <property type="component" value="Chromosome"/>
</dbReference>
<dbReference type="GO" id="GO:0005829">
    <property type="term" value="C:cytosol"/>
    <property type="evidence" value="ECO:0007669"/>
    <property type="project" value="TreeGrafter"/>
</dbReference>
<dbReference type="GO" id="GO:0005524">
    <property type="term" value="F:ATP binding"/>
    <property type="evidence" value="ECO:0007669"/>
    <property type="project" value="UniProtKB-KW"/>
</dbReference>
<dbReference type="GO" id="GO:0004592">
    <property type="term" value="F:pantoate-beta-alanine ligase activity"/>
    <property type="evidence" value="ECO:0007669"/>
    <property type="project" value="UniProtKB-UniRule"/>
</dbReference>
<dbReference type="GO" id="GO:0015940">
    <property type="term" value="P:pantothenate biosynthetic process"/>
    <property type="evidence" value="ECO:0007669"/>
    <property type="project" value="UniProtKB-UniRule"/>
</dbReference>
<dbReference type="CDD" id="cd00560">
    <property type="entry name" value="PanC"/>
    <property type="match status" value="1"/>
</dbReference>
<dbReference type="FunFam" id="3.40.50.620:FF:000114">
    <property type="entry name" value="Pantothenate synthetase"/>
    <property type="match status" value="1"/>
</dbReference>
<dbReference type="Gene3D" id="3.40.50.620">
    <property type="entry name" value="HUPs"/>
    <property type="match status" value="1"/>
</dbReference>
<dbReference type="Gene3D" id="3.30.1300.10">
    <property type="entry name" value="Pantoate-beta-alanine ligase, C-terminal domain"/>
    <property type="match status" value="2"/>
</dbReference>
<dbReference type="HAMAP" id="MF_00158">
    <property type="entry name" value="PanC"/>
    <property type="match status" value="1"/>
</dbReference>
<dbReference type="InterPro" id="IPR003721">
    <property type="entry name" value="Pantoate_ligase"/>
</dbReference>
<dbReference type="InterPro" id="IPR042176">
    <property type="entry name" value="Pantoate_ligase_C"/>
</dbReference>
<dbReference type="InterPro" id="IPR014729">
    <property type="entry name" value="Rossmann-like_a/b/a_fold"/>
</dbReference>
<dbReference type="NCBIfam" id="TIGR00018">
    <property type="entry name" value="panC"/>
    <property type="match status" value="1"/>
</dbReference>
<dbReference type="PANTHER" id="PTHR21299">
    <property type="entry name" value="CYTIDYLATE KINASE/PANTOATE-BETA-ALANINE LIGASE"/>
    <property type="match status" value="1"/>
</dbReference>
<dbReference type="PANTHER" id="PTHR21299:SF1">
    <property type="entry name" value="PANTOATE--BETA-ALANINE LIGASE"/>
    <property type="match status" value="1"/>
</dbReference>
<dbReference type="Pfam" id="PF02569">
    <property type="entry name" value="Pantoate_ligase"/>
    <property type="match status" value="1"/>
</dbReference>
<dbReference type="SUPFAM" id="SSF52374">
    <property type="entry name" value="Nucleotidylyl transferase"/>
    <property type="match status" value="2"/>
</dbReference>
<comment type="function">
    <text evidence="1">Catalyzes the condensation of pantoate with beta-alanine in an ATP-dependent reaction via a pantoyl-adenylate intermediate.</text>
</comment>
<comment type="catalytic activity">
    <reaction evidence="1">
        <text>(R)-pantoate + beta-alanine + ATP = (R)-pantothenate + AMP + diphosphate + H(+)</text>
        <dbReference type="Rhea" id="RHEA:10912"/>
        <dbReference type="ChEBI" id="CHEBI:15378"/>
        <dbReference type="ChEBI" id="CHEBI:15980"/>
        <dbReference type="ChEBI" id="CHEBI:29032"/>
        <dbReference type="ChEBI" id="CHEBI:30616"/>
        <dbReference type="ChEBI" id="CHEBI:33019"/>
        <dbReference type="ChEBI" id="CHEBI:57966"/>
        <dbReference type="ChEBI" id="CHEBI:456215"/>
        <dbReference type="EC" id="6.3.2.1"/>
    </reaction>
</comment>
<comment type="pathway">
    <text evidence="1">Cofactor biosynthesis; (R)-pantothenate biosynthesis; (R)-pantothenate from (R)-pantoate and beta-alanine: step 1/1.</text>
</comment>
<comment type="subunit">
    <text evidence="1">Homodimer.</text>
</comment>
<comment type="subcellular location">
    <subcellularLocation>
        <location evidence="1">Cytoplasm</location>
    </subcellularLocation>
</comment>
<comment type="miscellaneous">
    <text evidence="1">The reaction proceeds by a bi uni uni bi ping pong mechanism.</text>
</comment>
<comment type="similarity">
    <text evidence="1">Belongs to the pantothenate synthetase family.</text>
</comment>